<evidence type="ECO:0000255" key="1">
    <source>
        <dbReference type="HAMAP-Rule" id="MF_01342"/>
    </source>
</evidence>
<evidence type="ECO:0000305" key="2"/>
<keyword id="KW-1185">Reference proteome</keyword>
<keyword id="KW-0687">Ribonucleoprotein</keyword>
<keyword id="KW-0689">Ribosomal protein</keyword>
<keyword id="KW-0694">RNA-binding</keyword>
<keyword id="KW-0699">rRNA-binding</keyword>
<keyword id="KW-0820">tRNA-binding</keyword>
<proteinExistence type="inferred from homology"/>
<organism>
    <name type="scientific">Geobacillus kaustophilus (strain HTA426)</name>
    <dbReference type="NCBI Taxonomy" id="235909"/>
    <lineage>
        <taxon>Bacteria</taxon>
        <taxon>Bacillati</taxon>
        <taxon>Bacillota</taxon>
        <taxon>Bacilli</taxon>
        <taxon>Bacillales</taxon>
        <taxon>Anoxybacillaceae</taxon>
        <taxon>Geobacillus</taxon>
        <taxon>Geobacillus thermoleovorans group</taxon>
    </lineage>
</organism>
<protein>
    <recommendedName>
        <fullName evidence="1">Large ribosomal subunit protein uL16</fullName>
    </recommendedName>
    <alternativeName>
        <fullName evidence="2">50S ribosomal protein L16</fullName>
    </alternativeName>
</protein>
<accession>Q5L416</accession>
<gene>
    <name evidence="1" type="primary">rplP</name>
    <name type="ordered locus">GK0113</name>
</gene>
<feature type="chain" id="PRO_0000062107" description="Large ribosomal subunit protein uL16">
    <location>
        <begin position="1"/>
        <end position="141"/>
    </location>
</feature>
<name>RL16_GEOKA</name>
<sequence>MLMPKRVKYRREHRGRMKGRAKGGTEVHFGEFGLQALESAWITNRQIEAARRAMTRYMRRGGKVWIRIFPSKPYTAKPLEVRMGSGKGAPEGWVAVVKPGKVMFEVGGVSEEVAREALRLASHKLPIKCKFVKREETGGEA</sequence>
<comment type="function">
    <text evidence="1">Binds 23S rRNA and is also seen to make contacts with the A and possibly P site tRNAs.</text>
</comment>
<comment type="subunit">
    <text evidence="1">Part of the 50S ribosomal subunit.</text>
</comment>
<comment type="similarity">
    <text evidence="1">Belongs to the universal ribosomal protein uL16 family.</text>
</comment>
<reference key="1">
    <citation type="journal article" date="2004" name="Nucleic Acids Res.">
        <title>Thermoadaptation trait revealed by the genome sequence of thermophilic Geobacillus kaustophilus.</title>
        <authorList>
            <person name="Takami H."/>
            <person name="Takaki Y."/>
            <person name="Chee G.-J."/>
            <person name="Nishi S."/>
            <person name="Shimamura S."/>
            <person name="Suzuki H."/>
            <person name="Matsui S."/>
            <person name="Uchiyama I."/>
        </authorList>
    </citation>
    <scope>NUCLEOTIDE SEQUENCE [LARGE SCALE GENOMIC DNA]</scope>
    <source>
        <strain>HTA426</strain>
    </source>
</reference>
<dbReference type="EMBL" id="BA000043">
    <property type="protein sequence ID" value="BAD74398.1"/>
    <property type="molecule type" value="Genomic_DNA"/>
</dbReference>
<dbReference type="RefSeq" id="WP_011229627.1">
    <property type="nucleotide sequence ID" value="NC_006510.1"/>
</dbReference>
<dbReference type="SMR" id="Q5L416"/>
<dbReference type="STRING" id="235909.GK0113"/>
<dbReference type="GeneID" id="89612893"/>
<dbReference type="KEGG" id="gka:GK0113"/>
<dbReference type="eggNOG" id="COG0197">
    <property type="taxonomic scope" value="Bacteria"/>
</dbReference>
<dbReference type="HOGENOM" id="CLU_078858_2_1_9"/>
<dbReference type="Proteomes" id="UP000001172">
    <property type="component" value="Chromosome"/>
</dbReference>
<dbReference type="GO" id="GO:0022625">
    <property type="term" value="C:cytosolic large ribosomal subunit"/>
    <property type="evidence" value="ECO:0007669"/>
    <property type="project" value="TreeGrafter"/>
</dbReference>
<dbReference type="GO" id="GO:0019843">
    <property type="term" value="F:rRNA binding"/>
    <property type="evidence" value="ECO:0007669"/>
    <property type="project" value="UniProtKB-UniRule"/>
</dbReference>
<dbReference type="GO" id="GO:0003735">
    <property type="term" value="F:structural constituent of ribosome"/>
    <property type="evidence" value="ECO:0007669"/>
    <property type="project" value="InterPro"/>
</dbReference>
<dbReference type="GO" id="GO:0000049">
    <property type="term" value="F:tRNA binding"/>
    <property type="evidence" value="ECO:0007669"/>
    <property type="project" value="UniProtKB-KW"/>
</dbReference>
<dbReference type="GO" id="GO:0006412">
    <property type="term" value="P:translation"/>
    <property type="evidence" value="ECO:0007669"/>
    <property type="project" value="UniProtKB-UniRule"/>
</dbReference>
<dbReference type="CDD" id="cd01433">
    <property type="entry name" value="Ribosomal_L16_L10e"/>
    <property type="match status" value="1"/>
</dbReference>
<dbReference type="FunFam" id="3.90.1170.10:FF:000001">
    <property type="entry name" value="50S ribosomal protein L16"/>
    <property type="match status" value="1"/>
</dbReference>
<dbReference type="Gene3D" id="3.90.1170.10">
    <property type="entry name" value="Ribosomal protein L10e/L16"/>
    <property type="match status" value="1"/>
</dbReference>
<dbReference type="HAMAP" id="MF_01342">
    <property type="entry name" value="Ribosomal_uL16"/>
    <property type="match status" value="1"/>
</dbReference>
<dbReference type="InterPro" id="IPR047873">
    <property type="entry name" value="Ribosomal_uL16"/>
</dbReference>
<dbReference type="InterPro" id="IPR000114">
    <property type="entry name" value="Ribosomal_uL16_bact-type"/>
</dbReference>
<dbReference type="InterPro" id="IPR020798">
    <property type="entry name" value="Ribosomal_uL16_CS"/>
</dbReference>
<dbReference type="InterPro" id="IPR016180">
    <property type="entry name" value="Ribosomal_uL16_dom"/>
</dbReference>
<dbReference type="InterPro" id="IPR036920">
    <property type="entry name" value="Ribosomal_uL16_sf"/>
</dbReference>
<dbReference type="NCBIfam" id="TIGR01164">
    <property type="entry name" value="rplP_bact"/>
    <property type="match status" value="1"/>
</dbReference>
<dbReference type="PANTHER" id="PTHR12220">
    <property type="entry name" value="50S/60S RIBOSOMAL PROTEIN L16"/>
    <property type="match status" value="1"/>
</dbReference>
<dbReference type="PANTHER" id="PTHR12220:SF13">
    <property type="entry name" value="LARGE RIBOSOMAL SUBUNIT PROTEIN UL16M"/>
    <property type="match status" value="1"/>
</dbReference>
<dbReference type="Pfam" id="PF00252">
    <property type="entry name" value="Ribosomal_L16"/>
    <property type="match status" value="1"/>
</dbReference>
<dbReference type="PRINTS" id="PR00060">
    <property type="entry name" value="RIBOSOMALL16"/>
</dbReference>
<dbReference type="SUPFAM" id="SSF54686">
    <property type="entry name" value="Ribosomal protein L16p/L10e"/>
    <property type="match status" value="1"/>
</dbReference>
<dbReference type="PROSITE" id="PS00586">
    <property type="entry name" value="RIBOSOMAL_L16_1"/>
    <property type="match status" value="1"/>
</dbReference>
<dbReference type="PROSITE" id="PS00701">
    <property type="entry name" value="RIBOSOMAL_L16_2"/>
    <property type="match status" value="1"/>
</dbReference>